<comment type="subcellular location">
    <subcellularLocation>
        <location evidence="1">Nucleus</location>
        <location evidence="1">Nucleolus</location>
    </subcellularLocation>
</comment>
<comment type="similarity">
    <text evidence="3">Belongs to the WD repeat WDR55 family.</text>
</comment>
<gene>
    <name type="primary">JIP5</name>
    <name type="ordered locus">AEL261C</name>
</gene>
<protein>
    <recommendedName>
        <fullName>WD repeat-containing protein JIP5</fullName>
    </recommendedName>
</protein>
<organism>
    <name type="scientific">Eremothecium gossypii (strain ATCC 10895 / CBS 109.51 / FGSC 9923 / NRRL Y-1056)</name>
    <name type="common">Yeast</name>
    <name type="synonym">Ashbya gossypii</name>
    <dbReference type="NCBI Taxonomy" id="284811"/>
    <lineage>
        <taxon>Eukaryota</taxon>
        <taxon>Fungi</taxon>
        <taxon>Dikarya</taxon>
        <taxon>Ascomycota</taxon>
        <taxon>Saccharomycotina</taxon>
        <taxon>Saccharomycetes</taxon>
        <taxon>Saccharomycetales</taxon>
        <taxon>Saccharomycetaceae</taxon>
        <taxon>Eremothecium</taxon>
    </lineage>
</organism>
<sequence>MGKKKNSKAYSEELTDTTRPLLEFRYGNPLFAIACHPEQSVIVSGLATGHMFCHKYNAAELKEAQLKRLRKHDAGSKDDRKKLWEVVEVPGVETSGVSLLWTTKRHKGSVRCICFDADGTHIYSVGTDNVLKKADTLTGKVVKKCVLDPGQNVKYTKLVKSATHPLVLLGDENGNVTVLNSESLEQTNLIKSIHNGDAINDIFHFAKKSVYRYISLGQTTLAHWDSRESNEGDFAIAADDKQAKRKVILSDDQEDEILCGTFVDPEDGEVLVCGMGEGVLTVWRPKKNGLADQLTRIKVKKNESIDCIVPTLEDDGCVWCGCSDGNIYKVHVNRGTIIEVRKHSKLDEVTFLDLDSEYRLLSGGLDKAKLWDSEKSEQLTPGSDADDRVSNSSPSAGKSSESDSNDSENDATSSGGSSDEDSSSDESEHSDASDVEEELVGLTREQIIAELDKDLVEESEDVEDVRSQRKRKHGADLPTNANGKKQKGKNIKPERSMKTHGIRRFEGL</sequence>
<proteinExistence type="inferred from homology"/>
<reference key="1">
    <citation type="journal article" date="2004" name="Science">
        <title>The Ashbya gossypii genome as a tool for mapping the ancient Saccharomyces cerevisiae genome.</title>
        <authorList>
            <person name="Dietrich F.S."/>
            <person name="Voegeli S."/>
            <person name="Brachat S."/>
            <person name="Lerch A."/>
            <person name="Gates K."/>
            <person name="Steiner S."/>
            <person name="Mohr C."/>
            <person name="Poehlmann R."/>
            <person name="Luedi P."/>
            <person name="Choi S."/>
            <person name="Wing R.A."/>
            <person name="Flavier A."/>
            <person name="Gaffney T.D."/>
            <person name="Philippsen P."/>
        </authorList>
    </citation>
    <scope>NUCLEOTIDE SEQUENCE [LARGE SCALE GENOMIC DNA]</scope>
    <source>
        <strain>ATCC 10895 / CBS 109.51 / FGSC 9923 / NRRL Y-1056</strain>
    </source>
</reference>
<reference key="2">
    <citation type="journal article" date="2013" name="G3 (Bethesda)">
        <title>Genomes of Ashbya fungi isolated from insects reveal four mating-type loci, numerous translocations, lack of transposons, and distinct gene duplications.</title>
        <authorList>
            <person name="Dietrich F.S."/>
            <person name="Voegeli S."/>
            <person name="Kuo S."/>
            <person name="Philippsen P."/>
        </authorList>
    </citation>
    <scope>GENOME REANNOTATION</scope>
    <scope>SEQUENCE REVISION TO 473-492 AND 500</scope>
    <source>
        <strain>ATCC 10895 / CBS 109.51 / FGSC 9923 / NRRL Y-1056</strain>
    </source>
</reference>
<evidence type="ECO:0000250" key="1"/>
<evidence type="ECO:0000256" key="2">
    <source>
        <dbReference type="SAM" id="MobiDB-lite"/>
    </source>
</evidence>
<evidence type="ECO:0000305" key="3"/>
<feature type="chain" id="PRO_0000333545" description="WD repeat-containing protein JIP5">
    <location>
        <begin position="1"/>
        <end position="508"/>
    </location>
</feature>
<feature type="repeat" description="WD 1">
    <location>
        <begin position="46"/>
        <end position="94"/>
    </location>
</feature>
<feature type="repeat" description="WD 2">
    <location>
        <begin position="105"/>
        <end position="144"/>
    </location>
</feature>
<feature type="repeat" description="WD 3">
    <location>
        <begin position="150"/>
        <end position="189"/>
    </location>
</feature>
<feature type="repeat" description="WD 4">
    <location>
        <begin position="194"/>
        <end position="234"/>
    </location>
</feature>
<feature type="repeat" description="WD 5">
    <location>
        <begin position="252"/>
        <end position="293"/>
    </location>
</feature>
<feature type="repeat" description="WD 6">
    <location>
        <begin position="344"/>
        <end position="381"/>
    </location>
</feature>
<feature type="region of interest" description="Disordered" evidence="2">
    <location>
        <begin position="372"/>
        <end position="508"/>
    </location>
</feature>
<feature type="compositionally biased region" description="Basic and acidic residues" evidence="2">
    <location>
        <begin position="491"/>
        <end position="508"/>
    </location>
</feature>
<dbReference type="EMBL" id="AE016818">
    <property type="protein sequence ID" value="AAS52424.2"/>
    <property type="molecule type" value="Genomic_DNA"/>
</dbReference>
<dbReference type="RefSeq" id="NP_984600.2">
    <property type="nucleotide sequence ID" value="NM_209953.2"/>
</dbReference>
<dbReference type="SMR" id="Q758M2"/>
<dbReference type="FunCoup" id="Q758M2">
    <property type="interactions" value="128"/>
</dbReference>
<dbReference type="STRING" id="284811.Q758M2"/>
<dbReference type="EnsemblFungi" id="AAS52424">
    <property type="protein sequence ID" value="AAS52424"/>
    <property type="gene ID" value="AGOS_AEL261C"/>
</dbReference>
<dbReference type="GeneID" id="4620781"/>
<dbReference type="KEGG" id="ago:AGOS_AEL261C"/>
<dbReference type="eggNOG" id="KOG2444">
    <property type="taxonomic scope" value="Eukaryota"/>
</dbReference>
<dbReference type="HOGENOM" id="CLU_035623_0_0_1"/>
<dbReference type="InParanoid" id="Q758M2"/>
<dbReference type="OMA" id="DDNCIWC"/>
<dbReference type="OrthoDB" id="2288928at2759"/>
<dbReference type="Proteomes" id="UP000000591">
    <property type="component" value="Chromosome V"/>
</dbReference>
<dbReference type="GO" id="GO:0005730">
    <property type="term" value="C:nucleolus"/>
    <property type="evidence" value="ECO:0000318"/>
    <property type="project" value="GO_Central"/>
</dbReference>
<dbReference type="GO" id="GO:0045943">
    <property type="term" value="P:positive regulation of transcription by RNA polymerase I"/>
    <property type="evidence" value="ECO:0000318"/>
    <property type="project" value="GO_Central"/>
</dbReference>
<dbReference type="GO" id="GO:0042273">
    <property type="term" value="P:ribosomal large subunit biogenesis"/>
    <property type="evidence" value="ECO:0007669"/>
    <property type="project" value="EnsemblFungi"/>
</dbReference>
<dbReference type="GO" id="GO:0006364">
    <property type="term" value="P:rRNA processing"/>
    <property type="evidence" value="ECO:0000318"/>
    <property type="project" value="GO_Central"/>
</dbReference>
<dbReference type="Gene3D" id="2.130.10.10">
    <property type="entry name" value="YVTN repeat-like/Quinoprotein amine dehydrogenase"/>
    <property type="match status" value="2"/>
</dbReference>
<dbReference type="InterPro" id="IPR015943">
    <property type="entry name" value="WD40/YVTN_repeat-like_dom_sf"/>
</dbReference>
<dbReference type="InterPro" id="IPR036322">
    <property type="entry name" value="WD40_repeat_dom_sf"/>
</dbReference>
<dbReference type="InterPro" id="IPR001680">
    <property type="entry name" value="WD40_rpt"/>
</dbReference>
<dbReference type="InterPro" id="IPR017422">
    <property type="entry name" value="WDR55"/>
</dbReference>
<dbReference type="PANTHER" id="PTHR19924">
    <property type="entry name" value="UTP15 U3 SMALL NUCLEOLAR RNA-ASSOCIATED PROTEIN 15 FAMILY MEMBER"/>
    <property type="match status" value="1"/>
</dbReference>
<dbReference type="PANTHER" id="PTHR19924:SF31">
    <property type="entry name" value="WD REPEAT-CONTAINING PROTEIN JIP5"/>
    <property type="match status" value="1"/>
</dbReference>
<dbReference type="Pfam" id="PF00400">
    <property type="entry name" value="WD40"/>
    <property type="match status" value="1"/>
</dbReference>
<dbReference type="PIRSF" id="PIRSF038169">
    <property type="entry name" value="WD_repeat_p55"/>
    <property type="match status" value="1"/>
</dbReference>
<dbReference type="SMART" id="SM00320">
    <property type="entry name" value="WD40"/>
    <property type="match status" value="4"/>
</dbReference>
<dbReference type="SUPFAM" id="SSF50978">
    <property type="entry name" value="WD40 repeat-like"/>
    <property type="match status" value="1"/>
</dbReference>
<accession>Q758M2</accession>
<keyword id="KW-0539">Nucleus</keyword>
<keyword id="KW-1185">Reference proteome</keyword>
<keyword id="KW-0677">Repeat</keyword>
<keyword id="KW-0853">WD repeat</keyword>
<name>JIP5_EREGS</name>